<sequence length="557" mass="60932">MEPAAEILVDSPDVVYSPETIEARYEYRTTRVSREGGVLRVQPRATRFTFRTARQVPRLGVMLVGWGGNNGSTLTAAVLANRLRLTWPTRTGRKEANYYGSLTQAGTVNLGLDENGREVFVPFSALLPMVAPNDLVFDGWDISSLNLAEAMRRAQVLDCGLQEQLWPHMESLRPRPSVYIPEFIAANQTARADNLIPGTRAQQLEQIRKDIRDFRSSAGLDKVIVLWTANTERFCEVVPGRNDTAENLLHTIQLGLEVSPSTLFAVASILEDCAFLNGSPQNTLVPGALELASQRHVFVGGDDFKSGQTKVKSVLVDFLIGSGLKTMSIVSYNHLGNNDGQNLSAPLQFRSKEVTKSSVVDDMVHSNHVLYAPGERPDHCVVIKYVPYVGDSKRALDEYTSELMLGGTNTLVLHNTCEDSLLAAPIMLDLVLLTELCQRVSFCTDSDPEPQGFHTVLSLLSFLFKAPLVPPGSPVVNALFRQRSCIENIFRACVGLPPQNHMLLEHKMERPGPGIKPGEVVATSPLPCKKEPTPATNGCTGDANGHPQAPTPKLSTA</sequence>
<reference key="1">
    <citation type="journal article" date="2006" name="Subcell. Biochem.">
        <title>Mammalian inositol 3-phosphate synthase: its role in the biosynthesis of brain inositol and its clinical use as a psychoactive agent.</title>
        <authorList>
            <person name="Parthasarathy L.K."/>
            <person name="Seelan R.S."/>
            <person name="Tobias C."/>
            <person name="Casanova M.F."/>
            <person name="Parthasarathy R.N."/>
        </authorList>
    </citation>
    <scope>NUCLEOTIDE SEQUENCE [MRNA]</scope>
    <source>
        <tissue>Brain</tissue>
    </source>
</reference>
<reference key="2">
    <citation type="journal article" date="2005" name="Science">
        <title>The transcriptional landscape of the mammalian genome.</title>
        <authorList>
            <person name="Carninci P."/>
            <person name="Kasukawa T."/>
            <person name="Katayama S."/>
            <person name="Gough J."/>
            <person name="Frith M.C."/>
            <person name="Maeda N."/>
            <person name="Oyama R."/>
            <person name="Ravasi T."/>
            <person name="Lenhard B."/>
            <person name="Wells C."/>
            <person name="Kodzius R."/>
            <person name="Shimokawa K."/>
            <person name="Bajic V.B."/>
            <person name="Brenner S.E."/>
            <person name="Batalov S."/>
            <person name="Forrest A.R."/>
            <person name="Zavolan M."/>
            <person name="Davis M.J."/>
            <person name="Wilming L.G."/>
            <person name="Aidinis V."/>
            <person name="Allen J.E."/>
            <person name="Ambesi-Impiombato A."/>
            <person name="Apweiler R."/>
            <person name="Aturaliya R.N."/>
            <person name="Bailey T.L."/>
            <person name="Bansal M."/>
            <person name="Baxter L."/>
            <person name="Beisel K.W."/>
            <person name="Bersano T."/>
            <person name="Bono H."/>
            <person name="Chalk A.M."/>
            <person name="Chiu K.P."/>
            <person name="Choudhary V."/>
            <person name="Christoffels A."/>
            <person name="Clutterbuck D.R."/>
            <person name="Crowe M.L."/>
            <person name="Dalla E."/>
            <person name="Dalrymple B.P."/>
            <person name="de Bono B."/>
            <person name="Della Gatta G."/>
            <person name="di Bernardo D."/>
            <person name="Down T."/>
            <person name="Engstrom P."/>
            <person name="Fagiolini M."/>
            <person name="Faulkner G."/>
            <person name="Fletcher C.F."/>
            <person name="Fukushima T."/>
            <person name="Furuno M."/>
            <person name="Futaki S."/>
            <person name="Gariboldi M."/>
            <person name="Georgii-Hemming P."/>
            <person name="Gingeras T.R."/>
            <person name="Gojobori T."/>
            <person name="Green R.E."/>
            <person name="Gustincich S."/>
            <person name="Harbers M."/>
            <person name="Hayashi Y."/>
            <person name="Hensch T.K."/>
            <person name="Hirokawa N."/>
            <person name="Hill D."/>
            <person name="Huminiecki L."/>
            <person name="Iacono M."/>
            <person name="Ikeo K."/>
            <person name="Iwama A."/>
            <person name="Ishikawa T."/>
            <person name="Jakt M."/>
            <person name="Kanapin A."/>
            <person name="Katoh M."/>
            <person name="Kawasawa Y."/>
            <person name="Kelso J."/>
            <person name="Kitamura H."/>
            <person name="Kitano H."/>
            <person name="Kollias G."/>
            <person name="Krishnan S.P."/>
            <person name="Kruger A."/>
            <person name="Kummerfeld S.K."/>
            <person name="Kurochkin I.V."/>
            <person name="Lareau L.F."/>
            <person name="Lazarevic D."/>
            <person name="Lipovich L."/>
            <person name="Liu J."/>
            <person name="Liuni S."/>
            <person name="McWilliam S."/>
            <person name="Madan Babu M."/>
            <person name="Madera M."/>
            <person name="Marchionni L."/>
            <person name="Matsuda H."/>
            <person name="Matsuzawa S."/>
            <person name="Miki H."/>
            <person name="Mignone F."/>
            <person name="Miyake S."/>
            <person name="Morris K."/>
            <person name="Mottagui-Tabar S."/>
            <person name="Mulder N."/>
            <person name="Nakano N."/>
            <person name="Nakauchi H."/>
            <person name="Ng P."/>
            <person name="Nilsson R."/>
            <person name="Nishiguchi S."/>
            <person name="Nishikawa S."/>
            <person name="Nori F."/>
            <person name="Ohara O."/>
            <person name="Okazaki Y."/>
            <person name="Orlando V."/>
            <person name="Pang K.C."/>
            <person name="Pavan W.J."/>
            <person name="Pavesi G."/>
            <person name="Pesole G."/>
            <person name="Petrovsky N."/>
            <person name="Piazza S."/>
            <person name="Reed J."/>
            <person name="Reid J.F."/>
            <person name="Ring B.Z."/>
            <person name="Ringwald M."/>
            <person name="Rost B."/>
            <person name="Ruan Y."/>
            <person name="Salzberg S.L."/>
            <person name="Sandelin A."/>
            <person name="Schneider C."/>
            <person name="Schoenbach C."/>
            <person name="Sekiguchi K."/>
            <person name="Semple C.A."/>
            <person name="Seno S."/>
            <person name="Sessa L."/>
            <person name="Sheng Y."/>
            <person name="Shibata Y."/>
            <person name="Shimada H."/>
            <person name="Shimada K."/>
            <person name="Silva D."/>
            <person name="Sinclair B."/>
            <person name="Sperling S."/>
            <person name="Stupka E."/>
            <person name="Sugiura K."/>
            <person name="Sultana R."/>
            <person name="Takenaka Y."/>
            <person name="Taki K."/>
            <person name="Tammoja K."/>
            <person name="Tan S.L."/>
            <person name="Tang S."/>
            <person name="Taylor M.S."/>
            <person name="Tegner J."/>
            <person name="Teichmann S.A."/>
            <person name="Ueda H.R."/>
            <person name="van Nimwegen E."/>
            <person name="Verardo R."/>
            <person name="Wei C.L."/>
            <person name="Yagi K."/>
            <person name="Yamanishi H."/>
            <person name="Zabarovsky E."/>
            <person name="Zhu S."/>
            <person name="Zimmer A."/>
            <person name="Hide W."/>
            <person name="Bult C."/>
            <person name="Grimmond S.M."/>
            <person name="Teasdale R.D."/>
            <person name="Liu E.T."/>
            <person name="Brusic V."/>
            <person name="Quackenbush J."/>
            <person name="Wahlestedt C."/>
            <person name="Mattick J.S."/>
            <person name="Hume D.A."/>
            <person name="Kai C."/>
            <person name="Sasaki D."/>
            <person name="Tomaru Y."/>
            <person name="Fukuda S."/>
            <person name="Kanamori-Katayama M."/>
            <person name="Suzuki M."/>
            <person name="Aoki J."/>
            <person name="Arakawa T."/>
            <person name="Iida J."/>
            <person name="Imamura K."/>
            <person name="Itoh M."/>
            <person name="Kato T."/>
            <person name="Kawaji H."/>
            <person name="Kawagashira N."/>
            <person name="Kawashima T."/>
            <person name="Kojima M."/>
            <person name="Kondo S."/>
            <person name="Konno H."/>
            <person name="Nakano K."/>
            <person name="Ninomiya N."/>
            <person name="Nishio T."/>
            <person name="Okada M."/>
            <person name="Plessy C."/>
            <person name="Shibata K."/>
            <person name="Shiraki T."/>
            <person name="Suzuki S."/>
            <person name="Tagami M."/>
            <person name="Waki K."/>
            <person name="Watahiki A."/>
            <person name="Okamura-Oho Y."/>
            <person name="Suzuki H."/>
            <person name="Kawai J."/>
            <person name="Hayashizaki Y."/>
        </authorList>
    </citation>
    <scope>NUCLEOTIDE SEQUENCE [LARGE SCALE MRNA]</scope>
    <source>
        <strain>C57BL/6J</strain>
        <tissue>Cerebellum</tissue>
        <tissue>Liver</tissue>
    </source>
</reference>
<reference key="3">
    <citation type="journal article" date="2004" name="Genome Res.">
        <title>The status, quality, and expansion of the NIH full-length cDNA project: the Mammalian Gene Collection (MGC).</title>
        <authorList>
            <consortium name="The MGC Project Team"/>
        </authorList>
    </citation>
    <scope>NUCLEOTIDE SEQUENCE [LARGE SCALE MRNA]</scope>
    <source>
        <strain>FVB/N</strain>
        <tissue>Mammary tumor</tissue>
    </source>
</reference>
<reference key="4">
    <citation type="journal article" date="2004" name="Biol. Reprod.">
        <title>Characterization of the expression and regulation of genes necessary for myo-inositol biosynthesis and transport in the seminiferous epithelium.</title>
        <authorList>
            <person name="Chauvin T.R."/>
            <person name="Griswold M.D."/>
        </authorList>
    </citation>
    <scope>TISSUE SPECIFICITY</scope>
</reference>
<reference key="5">
    <citation type="journal article" date="2010" name="Cell">
        <title>A tissue-specific atlas of mouse protein phosphorylation and expression.</title>
        <authorList>
            <person name="Huttlin E.L."/>
            <person name="Jedrychowski M.P."/>
            <person name="Elias J.E."/>
            <person name="Goswami T."/>
            <person name="Rad R."/>
            <person name="Beausoleil S.A."/>
            <person name="Villen J."/>
            <person name="Haas W."/>
            <person name="Sowa M.E."/>
            <person name="Gygi S.P."/>
        </authorList>
    </citation>
    <scope>IDENTIFICATION BY MASS SPECTROMETRY [LARGE SCALE ANALYSIS]</scope>
    <source>
        <tissue>Brain</tissue>
        <tissue>Brown adipose tissue</tissue>
        <tissue>Heart</tissue>
        <tissue>Kidney</tissue>
        <tissue>Liver</tissue>
        <tissue>Lung</tissue>
        <tissue>Pancreas</tissue>
        <tissue>Spleen</tissue>
        <tissue>Testis</tissue>
    </source>
</reference>
<gene>
    <name type="primary">Isyna1</name>
    <name type="synonym">Ino1</name>
</gene>
<feature type="chain" id="PRO_0000324630" description="Inositol-3-phosphate synthase 1">
    <location>
        <begin position="1"/>
        <end position="557"/>
    </location>
</feature>
<feature type="region of interest" description="Disordered" evidence="4">
    <location>
        <begin position="512"/>
        <end position="557"/>
    </location>
</feature>
<feature type="binding site" evidence="1">
    <location>
        <position position="67"/>
    </location>
    <ligand>
        <name>NAD(+)</name>
        <dbReference type="ChEBI" id="CHEBI:57540"/>
    </ligand>
</feature>
<feature type="binding site" evidence="1">
    <location>
        <position position="68"/>
    </location>
    <ligand>
        <name>NAD(+)</name>
        <dbReference type="ChEBI" id="CHEBI:57540"/>
    </ligand>
</feature>
<feature type="binding site" evidence="1">
    <location>
        <position position="69"/>
    </location>
    <ligand>
        <name>NAD(+)</name>
        <dbReference type="ChEBI" id="CHEBI:57540"/>
    </ligand>
</feature>
<feature type="binding site" evidence="1">
    <location>
        <position position="70"/>
    </location>
    <ligand>
        <name>NAD(+)</name>
        <dbReference type="ChEBI" id="CHEBI:57540"/>
    </ligand>
</feature>
<feature type="binding site" evidence="1">
    <location>
        <position position="141"/>
    </location>
    <ligand>
        <name>NAD(+)</name>
        <dbReference type="ChEBI" id="CHEBI:57540"/>
    </ligand>
</feature>
<feature type="binding site" evidence="1">
    <location>
        <position position="177"/>
    </location>
    <ligand>
        <name>NAD(+)</name>
        <dbReference type="ChEBI" id="CHEBI:57540"/>
    </ligand>
</feature>
<feature type="binding site" evidence="1">
    <location>
        <position position="178"/>
    </location>
    <ligand>
        <name>NAD(+)</name>
        <dbReference type="ChEBI" id="CHEBI:57540"/>
    </ligand>
</feature>
<feature type="binding site" evidence="1">
    <location>
        <position position="188"/>
    </location>
    <ligand>
        <name>NAD(+)</name>
        <dbReference type="ChEBI" id="CHEBI:57540"/>
    </ligand>
</feature>
<feature type="binding site" evidence="1">
    <location>
        <position position="191"/>
    </location>
    <ligand>
        <name>NAD(+)</name>
        <dbReference type="ChEBI" id="CHEBI:57540"/>
    </ligand>
</feature>
<feature type="binding site" evidence="1">
    <location>
        <position position="228"/>
    </location>
    <ligand>
        <name>NAD(+)</name>
        <dbReference type="ChEBI" id="CHEBI:57540"/>
    </ligand>
</feature>
<feature type="binding site" evidence="1">
    <location>
        <position position="229"/>
    </location>
    <ligand>
        <name>NAD(+)</name>
        <dbReference type="ChEBI" id="CHEBI:57540"/>
    </ligand>
</feature>
<feature type="binding site" evidence="1">
    <location>
        <position position="230"/>
    </location>
    <ligand>
        <name>NAD(+)</name>
        <dbReference type="ChEBI" id="CHEBI:57540"/>
    </ligand>
</feature>
<feature type="binding site" evidence="1">
    <location>
        <position position="231"/>
    </location>
    <ligand>
        <name>NAD(+)</name>
        <dbReference type="ChEBI" id="CHEBI:57540"/>
    </ligand>
</feature>
<feature type="binding site" evidence="1">
    <location>
        <position position="278"/>
    </location>
    <ligand>
        <name>NAD(+)</name>
        <dbReference type="ChEBI" id="CHEBI:57540"/>
    </ligand>
</feature>
<feature type="binding site" evidence="1">
    <location>
        <position position="279"/>
    </location>
    <ligand>
        <name>NAD(+)</name>
        <dbReference type="ChEBI" id="CHEBI:57540"/>
    </ligand>
</feature>
<feature type="binding site" evidence="1">
    <location>
        <position position="303"/>
    </location>
    <ligand>
        <name>NAD(+)</name>
        <dbReference type="ChEBI" id="CHEBI:57540"/>
    </ligand>
</feature>
<feature type="binding site" evidence="1">
    <location>
        <position position="306"/>
    </location>
    <ligand>
        <name>NAD(+)</name>
        <dbReference type="ChEBI" id="CHEBI:57540"/>
    </ligand>
</feature>
<feature type="binding site" evidence="1">
    <location>
        <position position="337"/>
    </location>
    <ligand>
        <name>NAD(+)</name>
        <dbReference type="ChEBI" id="CHEBI:57540"/>
    </ligand>
</feature>
<feature type="binding site" evidence="1">
    <location>
        <position position="338"/>
    </location>
    <ligand>
        <name>NAD(+)</name>
        <dbReference type="ChEBI" id="CHEBI:57540"/>
    </ligand>
</feature>
<feature type="binding site" evidence="1">
    <location>
        <position position="339"/>
    </location>
    <ligand>
        <name>NAD(+)</name>
        <dbReference type="ChEBI" id="CHEBI:57540"/>
    </ligand>
</feature>
<feature type="binding site" evidence="1">
    <location>
        <position position="352"/>
    </location>
    <ligand>
        <name>NAD(+)</name>
        <dbReference type="ChEBI" id="CHEBI:57540"/>
    </ligand>
</feature>
<feature type="binding site" evidence="1">
    <location>
        <position position="390"/>
    </location>
    <ligand>
        <name>NAD(+)</name>
        <dbReference type="ChEBI" id="CHEBI:57540"/>
    </ligand>
</feature>
<feature type="binding site" evidence="1">
    <location>
        <position position="391"/>
    </location>
    <ligand>
        <name>NAD(+)</name>
        <dbReference type="ChEBI" id="CHEBI:57540"/>
    </ligand>
</feature>
<feature type="binding site" evidence="1">
    <location>
        <position position="419"/>
    </location>
    <ligand>
        <name>NAD(+)</name>
        <dbReference type="ChEBI" id="CHEBI:57540"/>
    </ligand>
</feature>
<feature type="binding site" evidence="1">
    <location>
        <position position="420"/>
    </location>
    <ligand>
        <name>NAD(+)</name>
        <dbReference type="ChEBI" id="CHEBI:57540"/>
    </ligand>
</feature>
<feature type="modified residue" description="Phosphoserine" evidence="3">
    <location>
        <position position="279"/>
    </location>
</feature>
<feature type="modified residue" description="Phosphoserine" evidence="3">
    <location>
        <position position="357"/>
    </location>
</feature>
<feature type="modified residue" description="Phosphoserine" evidence="2">
    <location>
        <position position="524"/>
    </location>
</feature>
<proteinExistence type="evidence at protein level"/>
<comment type="function">
    <text evidence="3">Key enzyme in myo-inositol biosynthesis pathway that catalyzes the conversion of glucose 6-phosphate to 1-myo-inositol 1-phosphate in a NAD-dependent manner. Rate-limiting enzyme in the synthesis of all inositol-containing compounds (By similarity).</text>
</comment>
<comment type="catalytic activity">
    <reaction evidence="3">
        <text>D-glucose 6-phosphate = 1D-myo-inositol 3-phosphate</text>
        <dbReference type="Rhea" id="RHEA:10716"/>
        <dbReference type="ChEBI" id="CHEBI:58401"/>
        <dbReference type="ChEBI" id="CHEBI:61548"/>
        <dbReference type="EC" id="5.5.1.4"/>
    </reaction>
</comment>
<comment type="cofactor">
    <cofactor evidence="3">
        <name>NAD(+)</name>
        <dbReference type="ChEBI" id="CHEBI:57540"/>
    </cofactor>
</comment>
<comment type="pathway">
    <text>Polyol metabolism; myo-inositol biosynthesis; myo-inositol from D-glucose 6-phosphate: step 1/2.</text>
</comment>
<comment type="subcellular location">
    <subcellularLocation>
        <location evidence="1">Cytoplasm</location>
    </subcellularLocation>
</comment>
<comment type="tissue specificity">
    <text evidence="5">In testis, it is expressed in Sertoli cells. Highly expressed in 2 types of germ cells, pachytene spermatocytes and round spermatids.</text>
</comment>
<comment type="similarity">
    <text evidence="6">Belongs to the myo-inositol 1-phosphate synthase family.</text>
</comment>
<organism>
    <name type="scientific">Mus musculus</name>
    <name type="common">Mouse</name>
    <dbReference type="NCBI Taxonomy" id="10090"/>
    <lineage>
        <taxon>Eukaryota</taxon>
        <taxon>Metazoa</taxon>
        <taxon>Chordata</taxon>
        <taxon>Craniata</taxon>
        <taxon>Vertebrata</taxon>
        <taxon>Euteleostomi</taxon>
        <taxon>Mammalia</taxon>
        <taxon>Eutheria</taxon>
        <taxon>Euarchontoglires</taxon>
        <taxon>Glires</taxon>
        <taxon>Rodentia</taxon>
        <taxon>Myomorpha</taxon>
        <taxon>Muroidea</taxon>
        <taxon>Muridae</taxon>
        <taxon>Murinae</taxon>
        <taxon>Mus</taxon>
        <taxon>Mus</taxon>
    </lineage>
</organism>
<keyword id="KW-0963">Cytoplasm</keyword>
<keyword id="KW-0398">Inositol biosynthesis</keyword>
<keyword id="KW-0413">Isomerase</keyword>
<keyword id="KW-0444">Lipid biosynthesis</keyword>
<keyword id="KW-0443">Lipid metabolism</keyword>
<keyword id="KW-0520">NAD</keyword>
<keyword id="KW-0594">Phospholipid biosynthesis</keyword>
<keyword id="KW-1208">Phospholipid metabolism</keyword>
<keyword id="KW-0597">Phosphoprotein</keyword>
<keyword id="KW-1185">Reference proteome</keyword>
<protein>
    <recommendedName>
        <fullName>Inositol-3-phosphate synthase 1</fullName>
        <shortName>IPS 1</shortName>
        <ecNumber evidence="3">5.5.1.4</ecNumber>
    </recommendedName>
    <alternativeName>
        <fullName>Myo-inositol 1-phosphate synthase</fullName>
        <shortName>MI-1-P synthase</shortName>
        <shortName>MIP synthase</shortName>
    </alternativeName>
</protein>
<name>INO1_MOUSE</name>
<dbReference type="EC" id="5.5.1.4" evidence="3"/>
<dbReference type="EMBL" id="AF288525">
    <property type="protein sequence ID" value="AAF90201.1"/>
    <property type="molecule type" value="mRNA"/>
</dbReference>
<dbReference type="EMBL" id="AK005029">
    <property type="protein sequence ID" value="BAB23756.1"/>
    <property type="molecule type" value="mRNA"/>
</dbReference>
<dbReference type="EMBL" id="AK079323">
    <property type="protein sequence ID" value="BAC37607.1"/>
    <property type="molecule type" value="mRNA"/>
</dbReference>
<dbReference type="EMBL" id="BC003458">
    <property type="protein sequence ID" value="AAH03458.1"/>
    <property type="molecule type" value="mRNA"/>
</dbReference>
<dbReference type="CCDS" id="CCDS22373.1"/>
<dbReference type="RefSeq" id="NP_076116.1">
    <property type="nucleotide sequence ID" value="NM_023627.1"/>
</dbReference>
<dbReference type="SMR" id="Q9JHU9"/>
<dbReference type="BioGRID" id="214923">
    <property type="interactions" value="7"/>
</dbReference>
<dbReference type="FunCoup" id="Q9JHU9">
    <property type="interactions" value="1547"/>
</dbReference>
<dbReference type="IntAct" id="Q9JHU9">
    <property type="interactions" value="4"/>
</dbReference>
<dbReference type="MINT" id="Q9JHU9"/>
<dbReference type="STRING" id="10090.ENSMUSP00000148077"/>
<dbReference type="GlyGen" id="Q9JHU9">
    <property type="glycosylation" value="2 sites, 1 N-linked glycan (1 site)"/>
</dbReference>
<dbReference type="iPTMnet" id="Q9JHU9"/>
<dbReference type="PhosphoSitePlus" id="Q9JHU9"/>
<dbReference type="SwissPalm" id="Q9JHU9"/>
<dbReference type="REPRODUCTION-2DPAGE" id="IPI00119886"/>
<dbReference type="REPRODUCTION-2DPAGE" id="Q9JHU9"/>
<dbReference type="jPOST" id="Q9JHU9"/>
<dbReference type="PaxDb" id="10090-ENSMUSP00000019283"/>
<dbReference type="PeptideAtlas" id="Q9JHU9"/>
<dbReference type="ProteomicsDB" id="267142"/>
<dbReference type="Pumba" id="Q9JHU9"/>
<dbReference type="Antibodypedia" id="28044">
    <property type="antibodies" value="93 antibodies from 23 providers"/>
</dbReference>
<dbReference type="DNASU" id="71780"/>
<dbReference type="Ensembl" id="ENSMUST00000019283.10">
    <property type="protein sequence ID" value="ENSMUSP00000019283.10"/>
    <property type="gene ID" value="ENSMUSG00000019139.11"/>
</dbReference>
<dbReference type="Ensembl" id="ENSMUST00000210005.2">
    <property type="protein sequence ID" value="ENSMUSP00000148077.2"/>
    <property type="gene ID" value="ENSMUSG00000019139.11"/>
</dbReference>
<dbReference type="GeneID" id="71780"/>
<dbReference type="KEGG" id="mmu:71780"/>
<dbReference type="UCSC" id="uc009mav.1">
    <property type="organism name" value="mouse"/>
</dbReference>
<dbReference type="AGR" id="MGI:1919030"/>
<dbReference type="CTD" id="51477"/>
<dbReference type="MGI" id="MGI:1919030">
    <property type="gene designation" value="Isyna1"/>
</dbReference>
<dbReference type="VEuPathDB" id="HostDB:ENSMUSG00000019139"/>
<dbReference type="eggNOG" id="KOG0693">
    <property type="taxonomic scope" value="Eukaryota"/>
</dbReference>
<dbReference type="GeneTree" id="ENSGT00390000018395"/>
<dbReference type="HOGENOM" id="CLU_021486_2_1_1"/>
<dbReference type="InParanoid" id="Q9JHU9"/>
<dbReference type="OMA" id="VYVPMKE"/>
<dbReference type="OrthoDB" id="2887at2759"/>
<dbReference type="PhylomeDB" id="Q9JHU9"/>
<dbReference type="TreeFam" id="TF300382"/>
<dbReference type="Reactome" id="R-MMU-1855183">
    <property type="pathway name" value="Synthesis of IP2, IP, and Ins in the cytosol"/>
</dbReference>
<dbReference type="UniPathway" id="UPA00823">
    <property type="reaction ID" value="UER00787"/>
</dbReference>
<dbReference type="BioGRID-ORCS" id="71780">
    <property type="hits" value="1 hit in 80 CRISPR screens"/>
</dbReference>
<dbReference type="ChiTaRS" id="Isyna1">
    <property type="organism name" value="mouse"/>
</dbReference>
<dbReference type="PRO" id="PR:Q9JHU9"/>
<dbReference type="Proteomes" id="UP000000589">
    <property type="component" value="Chromosome 8"/>
</dbReference>
<dbReference type="RNAct" id="Q9JHU9">
    <property type="molecule type" value="protein"/>
</dbReference>
<dbReference type="Bgee" id="ENSMUSG00000019139">
    <property type="expression patterns" value="Expressed in morula and 238 other cell types or tissues"/>
</dbReference>
<dbReference type="ExpressionAtlas" id="Q9JHU9">
    <property type="expression patterns" value="baseline and differential"/>
</dbReference>
<dbReference type="GO" id="GO:0005737">
    <property type="term" value="C:cytoplasm"/>
    <property type="evidence" value="ECO:0007669"/>
    <property type="project" value="UniProtKB-SubCell"/>
</dbReference>
<dbReference type="GO" id="GO:0004512">
    <property type="term" value="F:inositol-3-phosphate synthase activity"/>
    <property type="evidence" value="ECO:0007669"/>
    <property type="project" value="UniProtKB-EC"/>
</dbReference>
<dbReference type="GO" id="GO:0006021">
    <property type="term" value="P:inositol biosynthetic process"/>
    <property type="evidence" value="ECO:0007669"/>
    <property type="project" value="UniProtKB-UniPathway"/>
</dbReference>
<dbReference type="GO" id="GO:0008654">
    <property type="term" value="P:phospholipid biosynthetic process"/>
    <property type="evidence" value="ECO:0007669"/>
    <property type="project" value="UniProtKB-KW"/>
</dbReference>
<dbReference type="FunFam" id="3.40.50.720:FF:000069">
    <property type="entry name" value="Inositol-3-phosphate synthase 1"/>
    <property type="match status" value="1"/>
</dbReference>
<dbReference type="FunFam" id="3.40.50.720:FF:000171">
    <property type="entry name" value="inositol-3-phosphate synthase 1"/>
    <property type="match status" value="1"/>
</dbReference>
<dbReference type="Gene3D" id="3.40.50.720">
    <property type="entry name" value="NAD(P)-binding Rossmann-like Domain"/>
    <property type="match status" value="2"/>
</dbReference>
<dbReference type="InterPro" id="IPR002587">
    <property type="entry name" value="Myo-inos-1-P_Synthase"/>
</dbReference>
<dbReference type="InterPro" id="IPR013021">
    <property type="entry name" value="Myo-inos-1-P_Synthase_GAPDH"/>
</dbReference>
<dbReference type="InterPro" id="IPR036291">
    <property type="entry name" value="NAD(P)-bd_dom_sf"/>
</dbReference>
<dbReference type="PANTHER" id="PTHR11510">
    <property type="entry name" value="MYO-INOSITOL-1 PHOSPHATE SYNTHASE"/>
    <property type="match status" value="1"/>
</dbReference>
<dbReference type="Pfam" id="PF01658">
    <property type="entry name" value="Inos-1-P_synth"/>
    <property type="match status" value="1"/>
</dbReference>
<dbReference type="Pfam" id="PF07994">
    <property type="entry name" value="NAD_binding_5"/>
    <property type="match status" value="1"/>
</dbReference>
<dbReference type="PIRSF" id="PIRSF015578">
    <property type="entry name" value="Myoinos-ppht_syn"/>
    <property type="match status" value="1"/>
</dbReference>
<dbReference type="SUPFAM" id="SSF55347">
    <property type="entry name" value="Glyceraldehyde-3-phosphate dehydrogenase-like, C-terminal domain"/>
    <property type="match status" value="1"/>
</dbReference>
<dbReference type="SUPFAM" id="SSF51735">
    <property type="entry name" value="NAD(P)-binding Rossmann-fold domains"/>
    <property type="match status" value="1"/>
</dbReference>
<accession>Q9JHU9</accession>
<evidence type="ECO:0000250" key="1">
    <source>
        <dbReference type="UniProtKB" id="P11986"/>
    </source>
</evidence>
<evidence type="ECO:0000250" key="2">
    <source>
        <dbReference type="UniProtKB" id="Q6AYK3"/>
    </source>
</evidence>
<evidence type="ECO:0000250" key="3">
    <source>
        <dbReference type="UniProtKB" id="Q9NPH2"/>
    </source>
</evidence>
<evidence type="ECO:0000256" key="4">
    <source>
        <dbReference type="SAM" id="MobiDB-lite"/>
    </source>
</evidence>
<evidence type="ECO:0000269" key="5">
    <source>
    </source>
</evidence>
<evidence type="ECO:0000305" key="6"/>